<name>RS27_METMJ</name>
<accession>A3CX76</accession>
<keyword id="KW-0479">Metal-binding</keyword>
<keyword id="KW-0687">Ribonucleoprotein</keyword>
<keyword id="KW-0689">Ribosomal protein</keyword>
<keyword id="KW-0862">Zinc</keyword>
<keyword id="KW-0863">Zinc-finger</keyword>
<protein>
    <recommendedName>
        <fullName evidence="1">Small ribosomal subunit protein eS27</fullName>
    </recommendedName>
    <alternativeName>
        <fullName evidence="2">30S ribosomal protein S27e</fullName>
    </alternativeName>
</protein>
<sequence>MVRVNRENRSTFLRVKCPDCENEQVVFERASTVVECTVCGRILAEPHGGKADIKAEIMAVLE</sequence>
<dbReference type="EMBL" id="CP000562">
    <property type="protein sequence ID" value="ABN57976.1"/>
    <property type="molecule type" value="Genomic_DNA"/>
</dbReference>
<dbReference type="RefSeq" id="WP_011844885.1">
    <property type="nucleotide sequence ID" value="NC_009051.1"/>
</dbReference>
<dbReference type="SMR" id="A3CX76"/>
<dbReference type="STRING" id="368407.Memar_2050"/>
<dbReference type="GeneID" id="4848043"/>
<dbReference type="KEGG" id="mem:Memar_2050"/>
<dbReference type="eggNOG" id="arCOG04108">
    <property type="taxonomic scope" value="Archaea"/>
</dbReference>
<dbReference type="HOGENOM" id="CLU_199465_0_0_2"/>
<dbReference type="OrthoDB" id="5718at2157"/>
<dbReference type="Proteomes" id="UP000002146">
    <property type="component" value="Chromosome"/>
</dbReference>
<dbReference type="GO" id="GO:1990904">
    <property type="term" value="C:ribonucleoprotein complex"/>
    <property type="evidence" value="ECO:0007669"/>
    <property type="project" value="UniProtKB-KW"/>
</dbReference>
<dbReference type="GO" id="GO:0005840">
    <property type="term" value="C:ribosome"/>
    <property type="evidence" value="ECO:0007669"/>
    <property type="project" value="UniProtKB-KW"/>
</dbReference>
<dbReference type="GO" id="GO:0003735">
    <property type="term" value="F:structural constituent of ribosome"/>
    <property type="evidence" value="ECO:0007669"/>
    <property type="project" value="InterPro"/>
</dbReference>
<dbReference type="GO" id="GO:0008270">
    <property type="term" value="F:zinc ion binding"/>
    <property type="evidence" value="ECO:0007669"/>
    <property type="project" value="UniProtKB-UniRule"/>
</dbReference>
<dbReference type="GO" id="GO:0006412">
    <property type="term" value="P:translation"/>
    <property type="evidence" value="ECO:0007669"/>
    <property type="project" value="UniProtKB-UniRule"/>
</dbReference>
<dbReference type="FunFam" id="2.20.25.100:FF:000002">
    <property type="entry name" value="30S ribosomal protein S27e"/>
    <property type="match status" value="1"/>
</dbReference>
<dbReference type="Gene3D" id="2.20.25.100">
    <property type="entry name" value="Zn-binding ribosomal proteins"/>
    <property type="match status" value="1"/>
</dbReference>
<dbReference type="HAMAP" id="MF_00371">
    <property type="entry name" value="Ribosomal_eS27"/>
    <property type="match status" value="1"/>
</dbReference>
<dbReference type="InterPro" id="IPR000592">
    <property type="entry name" value="Ribosomal_eS27"/>
</dbReference>
<dbReference type="InterPro" id="IPR023407">
    <property type="entry name" value="Ribosomal_eS27_Zn-bd_dom_sf"/>
</dbReference>
<dbReference type="InterPro" id="IPR011332">
    <property type="entry name" value="Ribosomal_zn-bd"/>
</dbReference>
<dbReference type="NCBIfam" id="NF001629">
    <property type="entry name" value="PRK00415.1"/>
    <property type="match status" value="1"/>
</dbReference>
<dbReference type="PANTHER" id="PTHR11594">
    <property type="entry name" value="40S RIBOSOMAL PROTEIN S27"/>
    <property type="match status" value="1"/>
</dbReference>
<dbReference type="Pfam" id="PF01667">
    <property type="entry name" value="Ribosomal_S27e"/>
    <property type="match status" value="1"/>
</dbReference>
<dbReference type="SUPFAM" id="SSF57829">
    <property type="entry name" value="Zn-binding ribosomal proteins"/>
    <property type="match status" value="1"/>
</dbReference>
<proteinExistence type="inferred from homology"/>
<organism>
    <name type="scientific">Methanoculleus marisnigri (strain ATCC 35101 / DSM 1498 / JR1)</name>
    <dbReference type="NCBI Taxonomy" id="368407"/>
    <lineage>
        <taxon>Archaea</taxon>
        <taxon>Methanobacteriati</taxon>
        <taxon>Methanobacteriota</taxon>
        <taxon>Stenosarchaea group</taxon>
        <taxon>Methanomicrobia</taxon>
        <taxon>Methanomicrobiales</taxon>
        <taxon>Methanomicrobiaceae</taxon>
        <taxon>Methanoculleus</taxon>
    </lineage>
</organism>
<reference key="1">
    <citation type="journal article" date="2009" name="Stand. Genomic Sci.">
        <title>Complete genome sequence of Methanoculleus marisnigri Romesser et al. 1981 type strain JR1.</title>
        <authorList>
            <person name="Anderson I.J."/>
            <person name="Sieprawska-Lupa M."/>
            <person name="Lapidus A."/>
            <person name="Nolan M."/>
            <person name="Copeland A."/>
            <person name="Glavina Del Rio T."/>
            <person name="Tice H."/>
            <person name="Dalin E."/>
            <person name="Barry K."/>
            <person name="Saunders E."/>
            <person name="Han C."/>
            <person name="Brettin T."/>
            <person name="Detter J.C."/>
            <person name="Bruce D."/>
            <person name="Mikhailova N."/>
            <person name="Pitluck S."/>
            <person name="Hauser L."/>
            <person name="Land M."/>
            <person name="Lucas S."/>
            <person name="Richardson P."/>
            <person name="Whitman W.B."/>
            <person name="Kyrpides N.C."/>
        </authorList>
    </citation>
    <scope>NUCLEOTIDE SEQUENCE [LARGE SCALE GENOMIC DNA]</scope>
    <source>
        <strain>ATCC 35101 / DSM 1498 / JR1</strain>
    </source>
</reference>
<evidence type="ECO:0000255" key="1">
    <source>
        <dbReference type="HAMAP-Rule" id="MF_00371"/>
    </source>
</evidence>
<evidence type="ECO:0000305" key="2"/>
<feature type="chain" id="PRO_1000072126" description="Small ribosomal subunit protein eS27">
    <location>
        <begin position="1"/>
        <end position="62"/>
    </location>
</feature>
<feature type="zinc finger region" description="C4-type" evidence="1">
    <location>
        <begin position="17"/>
        <end position="39"/>
    </location>
</feature>
<feature type="binding site" evidence="1">
    <location>
        <position position="17"/>
    </location>
    <ligand>
        <name>Zn(2+)</name>
        <dbReference type="ChEBI" id="CHEBI:29105"/>
    </ligand>
</feature>
<feature type="binding site" evidence="1">
    <location>
        <position position="20"/>
    </location>
    <ligand>
        <name>Zn(2+)</name>
        <dbReference type="ChEBI" id="CHEBI:29105"/>
    </ligand>
</feature>
<feature type="binding site" evidence="1">
    <location>
        <position position="36"/>
    </location>
    <ligand>
        <name>Zn(2+)</name>
        <dbReference type="ChEBI" id="CHEBI:29105"/>
    </ligand>
</feature>
<feature type="binding site" evidence="1">
    <location>
        <position position="39"/>
    </location>
    <ligand>
        <name>Zn(2+)</name>
        <dbReference type="ChEBI" id="CHEBI:29105"/>
    </ligand>
</feature>
<comment type="cofactor">
    <cofactor evidence="1">
        <name>Zn(2+)</name>
        <dbReference type="ChEBI" id="CHEBI:29105"/>
    </cofactor>
    <text evidence="1">Binds 1 zinc ion per subunit.</text>
</comment>
<comment type="subunit">
    <text evidence="1">Part of the 30S ribosomal subunit.</text>
</comment>
<comment type="similarity">
    <text evidence="1">Belongs to the eukaryotic ribosomal protein eS27 family.</text>
</comment>
<gene>
    <name evidence="1" type="primary">rps27e</name>
    <name type="ordered locus">Memar_2050</name>
</gene>